<keyword id="KW-0963">Cytoplasm</keyword>
<keyword id="KW-0648">Protein biosynthesis</keyword>
<protein>
    <recommendedName>
        <fullName evidence="1">Ribosome-recycling factor</fullName>
        <shortName evidence="1">RRF</shortName>
    </recommendedName>
    <alternativeName>
        <fullName evidence="1">Ribosome-releasing factor</fullName>
    </alternativeName>
</protein>
<reference key="1">
    <citation type="journal article" date="2003" name="Nat. Genet.">
        <title>Comparative analysis of the genome sequences of Bordetella pertussis, Bordetella parapertussis and Bordetella bronchiseptica.</title>
        <authorList>
            <person name="Parkhill J."/>
            <person name="Sebaihia M."/>
            <person name="Preston A."/>
            <person name="Murphy L.D."/>
            <person name="Thomson N.R."/>
            <person name="Harris D.E."/>
            <person name="Holden M.T.G."/>
            <person name="Churcher C.M."/>
            <person name="Bentley S.D."/>
            <person name="Mungall K.L."/>
            <person name="Cerdeno-Tarraga A.-M."/>
            <person name="Temple L."/>
            <person name="James K.D."/>
            <person name="Harris B."/>
            <person name="Quail M.A."/>
            <person name="Achtman M."/>
            <person name="Atkin R."/>
            <person name="Baker S."/>
            <person name="Basham D."/>
            <person name="Bason N."/>
            <person name="Cherevach I."/>
            <person name="Chillingworth T."/>
            <person name="Collins M."/>
            <person name="Cronin A."/>
            <person name="Davis P."/>
            <person name="Doggett J."/>
            <person name="Feltwell T."/>
            <person name="Goble A."/>
            <person name="Hamlin N."/>
            <person name="Hauser H."/>
            <person name="Holroyd S."/>
            <person name="Jagels K."/>
            <person name="Leather S."/>
            <person name="Moule S."/>
            <person name="Norberczak H."/>
            <person name="O'Neil S."/>
            <person name="Ormond D."/>
            <person name="Price C."/>
            <person name="Rabbinowitsch E."/>
            <person name="Rutter S."/>
            <person name="Sanders M."/>
            <person name="Saunders D."/>
            <person name="Seeger K."/>
            <person name="Sharp S."/>
            <person name="Simmonds M."/>
            <person name="Skelton J."/>
            <person name="Squares R."/>
            <person name="Squares S."/>
            <person name="Stevens K."/>
            <person name="Unwin L."/>
            <person name="Whitehead S."/>
            <person name="Barrell B.G."/>
            <person name="Maskell D.J."/>
        </authorList>
    </citation>
    <scope>NUCLEOTIDE SEQUENCE [LARGE SCALE GENOMIC DNA]</scope>
    <source>
        <strain>12822 / ATCC BAA-587 / NCTC 13253</strain>
    </source>
</reference>
<organism>
    <name type="scientific">Bordetella parapertussis (strain 12822 / ATCC BAA-587 / NCTC 13253)</name>
    <dbReference type="NCBI Taxonomy" id="257311"/>
    <lineage>
        <taxon>Bacteria</taxon>
        <taxon>Pseudomonadati</taxon>
        <taxon>Pseudomonadota</taxon>
        <taxon>Betaproteobacteria</taxon>
        <taxon>Burkholderiales</taxon>
        <taxon>Alcaligenaceae</taxon>
        <taxon>Bordetella</taxon>
    </lineage>
</organism>
<comment type="function">
    <text evidence="1">Responsible for the release of ribosomes from messenger RNA at the termination of protein biosynthesis. May increase the efficiency of translation by recycling ribosomes from one round of translation to another.</text>
</comment>
<comment type="subcellular location">
    <subcellularLocation>
        <location evidence="1">Cytoplasm</location>
    </subcellularLocation>
</comment>
<comment type="similarity">
    <text evidence="1">Belongs to the RRF family.</text>
</comment>
<gene>
    <name evidence="1" type="primary">frr</name>
    <name type="ordered locus">BPP1530</name>
</gene>
<proteinExistence type="inferred from homology"/>
<dbReference type="EMBL" id="BX640427">
    <property type="protein sequence ID" value="CAE36832.1"/>
    <property type="molecule type" value="Genomic_DNA"/>
</dbReference>
<dbReference type="RefSeq" id="WP_003811796.1">
    <property type="nucleotide sequence ID" value="NC_002928.3"/>
</dbReference>
<dbReference type="SMR" id="Q7WA57"/>
<dbReference type="GeneID" id="69601333"/>
<dbReference type="GeneID" id="93203289"/>
<dbReference type="KEGG" id="bpa:BPP1530"/>
<dbReference type="HOGENOM" id="CLU_073981_2_0_4"/>
<dbReference type="Proteomes" id="UP000001421">
    <property type="component" value="Chromosome"/>
</dbReference>
<dbReference type="GO" id="GO:0005829">
    <property type="term" value="C:cytosol"/>
    <property type="evidence" value="ECO:0007669"/>
    <property type="project" value="GOC"/>
</dbReference>
<dbReference type="GO" id="GO:0043023">
    <property type="term" value="F:ribosomal large subunit binding"/>
    <property type="evidence" value="ECO:0007669"/>
    <property type="project" value="TreeGrafter"/>
</dbReference>
<dbReference type="GO" id="GO:0002184">
    <property type="term" value="P:cytoplasmic translational termination"/>
    <property type="evidence" value="ECO:0007669"/>
    <property type="project" value="TreeGrafter"/>
</dbReference>
<dbReference type="CDD" id="cd00520">
    <property type="entry name" value="RRF"/>
    <property type="match status" value="1"/>
</dbReference>
<dbReference type="FunFam" id="1.10.132.20:FF:000001">
    <property type="entry name" value="Ribosome-recycling factor"/>
    <property type="match status" value="1"/>
</dbReference>
<dbReference type="FunFam" id="3.30.1360.40:FF:000001">
    <property type="entry name" value="Ribosome-recycling factor"/>
    <property type="match status" value="1"/>
</dbReference>
<dbReference type="Gene3D" id="3.30.1360.40">
    <property type="match status" value="1"/>
</dbReference>
<dbReference type="Gene3D" id="1.10.132.20">
    <property type="entry name" value="Ribosome-recycling factor"/>
    <property type="match status" value="1"/>
</dbReference>
<dbReference type="HAMAP" id="MF_00040">
    <property type="entry name" value="RRF"/>
    <property type="match status" value="1"/>
</dbReference>
<dbReference type="InterPro" id="IPR002661">
    <property type="entry name" value="Ribosome_recyc_fac"/>
</dbReference>
<dbReference type="InterPro" id="IPR023584">
    <property type="entry name" value="Ribosome_recyc_fac_dom"/>
</dbReference>
<dbReference type="InterPro" id="IPR036191">
    <property type="entry name" value="RRF_sf"/>
</dbReference>
<dbReference type="NCBIfam" id="TIGR00496">
    <property type="entry name" value="frr"/>
    <property type="match status" value="1"/>
</dbReference>
<dbReference type="PANTHER" id="PTHR20982:SF3">
    <property type="entry name" value="MITOCHONDRIAL RIBOSOME RECYCLING FACTOR PSEUDO 1"/>
    <property type="match status" value="1"/>
</dbReference>
<dbReference type="PANTHER" id="PTHR20982">
    <property type="entry name" value="RIBOSOME RECYCLING FACTOR"/>
    <property type="match status" value="1"/>
</dbReference>
<dbReference type="Pfam" id="PF01765">
    <property type="entry name" value="RRF"/>
    <property type="match status" value="1"/>
</dbReference>
<dbReference type="SUPFAM" id="SSF55194">
    <property type="entry name" value="Ribosome recycling factor, RRF"/>
    <property type="match status" value="1"/>
</dbReference>
<feature type="chain" id="PRO_0000167422" description="Ribosome-recycling factor">
    <location>
        <begin position="1"/>
        <end position="186"/>
    </location>
</feature>
<evidence type="ECO:0000255" key="1">
    <source>
        <dbReference type="HAMAP-Rule" id="MF_00040"/>
    </source>
</evidence>
<sequence length="186" mass="20709">MSVADIRKSAETRMAKSLETLKASLAKIRTGRAHTGILDHVQVEYYGSPVPISQVANVNLVDARTISVQPYEKSMAGPIEKAIRESDLGLNPVSMGETIRVPMPALTEERRRDLTKVVKSEGEDAKVAVRNLRREANEALKKLVKDKEISEDDERRAQDDVQKLTDRAVGDIDKMIVQKEAEIMTV</sequence>
<name>RRF_BORPA</name>
<accession>Q7WA57</accession>